<organism>
    <name type="scientific">Rhizobium rhizogenes</name>
    <name type="common">Agrobacterium rhizogenes</name>
    <dbReference type="NCBI Taxonomy" id="359"/>
    <lineage>
        <taxon>Bacteria</taxon>
        <taxon>Pseudomonadati</taxon>
        <taxon>Pseudomonadota</taxon>
        <taxon>Alphaproteobacteria</taxon>
        <taxon>Hyphomicrobiales</taxon>
        <taxon>Rhizobiaceae</taxon>
        <taxon>Rhizobium/Agrobacterium group</taxon>
        <taxon>Rhizobium</taxon>
    </lineage>
</organism>
<sequence>MAKSVLKAAPVVVGLTALMERHADALSSQLQAHHLKVFPPHSEKGIRTFGPSEASKLLGVGESYLRQTASEMPELNVSMSPGGRRMFSIEDIHVIRKYMDQVGRGNRRYLPHRRGGEQLQVISVMNFKGGSGKTTTAAHLAQYLAMRGYRVLAIDLDPQASLSALFGSQPETDVGPNETLYGAIRYDDEQVAIERVVRGTYIPDLHLIPGNLELMEFEHDTPRALMNRKEGDTLFYGRISQVIEDIADNYDVVVIDCPPQLGYLTLSALTAATSILVTVHPQMLDVMSMNQFLAMTSNLLREIENAGAKFKFNWMRYLITRFEPSDGPQNQMVGYLRSIFGENVLNFPMLKTTAVSDAGLTNQTLFEVERGLFTRSTYDRALEAMNAVNDEIETLIKKAWGRPT</sequence>
<geneLocation type="plasmid">
    <name>pRiA4b</name>
</geneLocation>
<dbReference type="EMBL" id="X04833">
    <property type="protein sequence ID" value="CAA28527.1"/>
    <property type="molecule type" value="Genomic_DNA"/>
</dbReference>
<dbReference type="PIR" id="A32534">
    <property type="entry name" value="A32534"/>
</dbReference>
<dbReference type="RefSeq" id="WP_034521134.1">
    <property type="nucleotide sequence ID" value="NZ_VCBD01000008.1"/>
</dbReference>
<dbReference type="SMR" id="P05682"/>
<dbReference type="STRING" id="359.B0909_18440"/>
<dbReference type="GeneID" id="86852841"/>
<dbReference type="eggNOG" id="COG1192">
    <property type="taxonomic scope" value="Bacteria"/>
</dbReference>
<dbReference type="GO" id="GO:0006260">
    <property type="term" value="P:DNA replication"/>
    <property type="evidence" value="ECO:0007669"/>
    <property type="project" value="UniProtKB-KW"/>
</dbReference>
<dbReference type="GO" id="GO:0006276">
    <property type="term" value="P:plasmid maintenance"/>
    <property type="evidence" value="ECO:0007669"/>
    <property type="project" value="UniProtKB-KW"/>
</dbReference>
<dbReference type="CDD" id="cd02042">
    <property type="entry name" value="ParAB_family"/>
    <property type="match status" value="1"/>
</dbReference>
<dbReference type="Gene3D" id="1.10.1660.10">
    <property type="match status" value="1"/>
</dbReference>
<dbReference type="Gene3D" id="3.40.50.300">
    <property type="entry name" value="P-loop containing nucleotide triphosphate hydrolases"/>
    <property type="match status" value="1"/>
</dbReference>
<dbReference type="InterPro" id="IPR025669">
    <property type="entry name" value="AAA_dom"/>
</dbReference>
<dbReference type="InterPro" id="IPR050678">
    <property type="entry name" value="DNA_Partitioning_ATPase"/>
</dbReference>
<dbReference type="InterPro" id="IPR027417">
    <property type="entry name" value="P-loop_NTPase"/>
</dbReference>
<dbReference type="InterPro" id="IPR017818">
    <property type="entry name" value="Plasmid_partition_RepA"/>
</dbReference>
<dbReference type="NCBIfam" id="TIGR03453">
    <property type="entry name" value="partition_RepA"/>
    <property type="match status" value="1"/>
</dbReference>
<dbReference type="NCBIfam" id="NF010443">
    <property type="entry name" value="PRK13869.1"/>
    <property type="match status" value="1"/>
</dbReference>
<dbReference type="PANTHER" id="PTHR13696">
    <property type="entry name" value="P-LOOP CONTAINING NUCLEOSIDE TRIPHOSPHATE HYDROLASE"/>
    <property type="match status" value="1"/>
</dbReference>
<dbReference type="PANTHER" id="PTHR13696:SF52">
    <property type="entry name" value="PARA FAMILY PROTEIN CT_582"/>
    <property type="match status" value="1"/>
</dbReference>
<dbReference type="Pfam" id="PF13614">
    <property type="entry name" value="AAA_31"/>
    <property type="match status" value="1"/>
</dbReference>
<dbReference type="SUPFAM" id="SSF52540">
    <property type="entry name" value="P-loop containing nucleoside triphosphate hydrolases"/>
    <property type="match status" value="1"/>
</dbReference>
<name>REPA_RHIRH</name>
<keyword id="KW-0235">DNA replication</keyword>
<keyword id="KW-0614">Plasmid</keyword>
<keyword id="KW-0615">Plasmid copy control</keyword>
<feature type="chain" id="PRO_0000097250" description="Putative replication protein A">
    <location>
        <begin position="1"/>
        <end position="404"/>
    </location>
</feature>
<gene>
    <name type="primary">repA</name>
</gene>
<protein>
    <recommendedName>
        <fullName>Putative replication protein A</fullName>
    </recommendedName>
</protein>
<accession>P05682</accession>
<reference key="1">
    <citation type="journal article" date="1987" name="Mol. Gen. Genet.">
        <title>Characterization and sequence determination of the replicator region in the hairy-root-inducing plasmid pRiA4b.</title>
        <authorList>
            <person name="Nishiguchi R."/>
            <person name="Takanami M."/>
            <person name="Oka A."/>
        </authorList>
    </citation>
    <scope>NUCLEOTIDE SEQUENCE [GENOMIC DNA]</scope>
    <source>
        <strain>A4</strain>
    </source>
</reference>
<comment type="function">
    <text>This protein is coded by a hairy root Ri plasmid. It is possibly involved in regulating the plasmid copy-number.</text>
</comment>
<proteinExistence type="predicted"/>